<organismHost>
    <name type="scientific">Saimiri sciureus</name>
    <name type="common">Common squirrel monkey</name>
    <dbReference type="NCBI Taxonomy" id="9521"/>
</organismHost>
<keyword id="KW-0053">Apoptosis</keyword>
<keyword id="KW-0945">Host-virus interaction</keyword>
<keyword id="KW-1081">Inhibition of host apoptosis by viral BCL2-like protein</keyword>
<keyword id="KW-1119">Modulation of host cell apoptosis by virus</keyword>
<keyword id="KW-1185">Reference proteome</keyword>
<protein>
    <recommendedName>
        <fullName>Bcl-2-like gene 16 protein</fullName>
    </recommendedName>
</protein>
<evidence type="ECO:0000305" key="1"/>
<reference key="1">
    <citation type="journal article" date="1992" name="J. Virol.">
        <title>Primary structure of the herpesvirus saimiri genome.</title>
        <authorList>
            <person name="Albrecht J.-C."/>
            <person name="Nicholas J."/>
            <person name="Biller D."/>
            <person name="Cameron K.R."/>
            <person name="Biesinger B."/>
            <person name="Newman C."/>
            <person name="Wittmann S."/>
            <person name="Craxton M.A."/>
            <person name="Coleman H."/>
            <person name="Fleckenstein B."/>
            <person name="Honess R.W."/>
        </authorList>
    </citation>
    <scope>NUCLEOTIDE SEQUENCE [LARGE SCALE GENOMIC DNA]</scope>
</reference>
<gene>
    <name type="primary">16</name>
</gene>
<comment type="similarity">
    <text evidence="1">Belongs to the Bcl-2 family.</text>
</comment>
<feature type="chain" id="PRO_0000143092" description="Bcl-2-like gene 16 protein">
    <location>
        <begin position="1"/>
        <end position="160"/>
    </location>
</feature>
<feature type="short sequence motif" description="BH1">
    <location>
        <begin position="64"/>
        <end position="84"/>
    </location>
</feature>
<sequence>MSSIKFQNIIENILKKCQDNRHSQDSVVRAVHSVIHQYNKFEALMPDFSLCVHDRIKFTGEAILLTTEHTTNWGKVVAMLSFSAAVLQTIDEEYKCVATSMLSSYISRSVGANWFIENGGEKSLVEFCNSIMPQNPFNVLNFLVPAVLAGLVLMQTLLIK</sequence>
<organism>
    <name type="scientific">Saimiriine herpesvirus 2 (strain 11)</name>
    <name type="common">SaHV-2</name>
    <name type="synonym">Herpesvirus saimiri</name>
    <dbReference type="NCBI Taxonomy" id="10383"/>
    <lineage>
        <taxon>Viruses</taxon>
        <taxon>Duplodnaviria</taxon>
        <taxon>Heunggongvirae</taxon>
        <taxon>Peploviricota</taxon>
        <taxon>Herviviricetes</taxon>
        <taxon>Herpesvirales</taxon>
        <taxon>Orthoherpesviridae</taxon>
        <taxon>Gammaherpesvirinae</taxon>
        <taxon>Rhadinovirus</taxon>
        <taxon>Rhadinovirus saimiriinegamma2</taxon>
        <taxon>Saimiriine herpesvirus 2</taxon>
    </lineage>
</organism>
<name>VG16_SHV21</name>
<dbReference type="EMBL" id="X64346">
    <property type="protein sequence ID" value="CAA45639.1"/>
    <property type="molecule type" value="Genomic_DNA"/>
</dbReference>
<dbReference type="RefSeq" id="NP_040218.1">
    <property type="nucleotide sequence ID" value="NC_001350.1"/>
</dbReference>
<dbReference type="KEGG" id="vg:1682512"/>
<dbReference type="Proteomes" id="UP000000587">
    <property type="component" value="Segment"/>
</dbReference>
<dbReference type="GO" id="GO:0042981">
    <property type="term" value="P:regulation of apoptotic process"/>
    <property type="evidence" value="ECO:0007669"/>
    <property type="project" value="InterPro"/>
</dbReference>
<dbReference type="GO" id="GO:0033668">
    <property type="term" value="P:symbiont-mediated suppression of host apoptosis"/>
    <property type="evidence" value="ECO:0007669"/>
    <property type="project" value="UniProtKB-KW"/>
</dbReference>
<dbReference type="Gene3D" id="1.10.437.10">
    <property type="entry name" value="Blc2-like"/>
    <property type="match status" value="1"/>
</dbReference>
<dbReference type="InterPro" id="IPR036834">
    <property type="entry name" value="Bcl-2-like_sf"/>
</dbReference>
<dbReference type="InterPro" id="IPR046371">
    <property type="entry name" value="Bcl-2_BH1-3"/>
</dbReference>
<dbReference type="InterPro" id="IPR002475">
    <property type="entry name" value="Bcl2-like"/>
</dbReference>
<dbReference type="InterPro" id="IPR020717">
    <property type="entry name" value="Bcl2_BH1_motif_CS"/>
</dbReference>
<dbReference type="SMART" id="SM00337">
    <property type="entry name" value="BCL"/>
    <property type="match status" value="1"/>
</dbReference>
<dbReference type="SUPFAM" id="SSF56854">
    <property type="entry name" value="Bcl-2 inhibitors of programmed cell death"/>
    <property type="match status" value="1"/>
</dbReference>
<dbReference type="PROSITE" id="PS50062">
    <property type="entry name" value="BCL2_FAMILY"/>
    <property type="match status" value="1"/>
</dbReference>
<dbReference type="PROSITE" id="PS01080">
    <property type="entry name" value="BH1"/>
    <property type="match status" value="1"/>
</dbReference>
<proteinExistence type="inferred from homology"/>
<accession>Q01001</accession>